<comment type="function">
    <text evidence="1">Chaperone involved in the maturation of iron-sulfur cluster-containing proteins. Has a low intrinsic ATPase activity which is markedly stimulated by HscB.</text>
</comment>
<comment type="similarity">
    <text evidence="1">Belongs to the heat shock protein 70 family.</text>
</comment>
<sequence length="620" mass="65729">MALLQIAEPGLTAAPHQHRLAVGIDLGTTNSLVAAVRSGVANTLADESAQHSLPSVVRYTQDSVFVGREAEAFSAQDPQNTIISVKRFMGRSLDDIQSGSQTFPYIFEASDNGLPIFITPQGKVNPIQVSADILKPLVERAESTLGGTLEGVVITVPAYFDDAQRQGTKEAAALVGVKVLRLLNEPTAAAIAYGLDSGQEGVIAVYDLGGGTFDISILRLNKGVFEVLATGGDSALGGDDFDHMLQAHFQQQWSLDEVSAGLSRMLLIEARKVKEALTDSDNTTANVTDDNGNVLSLNVSRATFDEMISKLVKKTVSSCRRALRDAGVSTDEVIETVMVGGSTRVPLVRGEVANFFGKTPLTSIDPDRVVAIGAAIQADILVGNKPDSDLLLLDVIPLSLGIETMGGLVEKVVARNTTIPVARAQEFTTFKDGQTAMAFHVVQGERELVADCRSLARFTLNGIPPLAAGAAHIRVTFQVDADGLLSVTAMEKSTGVKTTIQVKPSFGLSDAEIGSMLKDSMANAKEDISRRMLAEKQVEAARVLESLSAALNKDGQLLAANELSAIQGAMALLAQLAEEKDTDAIEDAIEALDTATQDFAAKRMDNSIKLALKGQSVDNI</sequence>
<reference key="1">
    <citation type="journal article" date="2008" name="PLoS ONE">
        <title>Environmental adaptation: genomic analysis of the piezotolerant and psychrotolerant deep-sea iron reducing bacterium Shewanella piezotolerans WP3.</title>
        <authorList>
            <person name="Wang F."/>
            <person name="Wang J."/>
            <person name="Jian H."/>
            <person name="Zhang B."/>
            <person name="Li S."/>
            <person name="Wang F."/>
            <person name="Zeng X."/>
            <person name="Gao L."/>
            <person name="Bartlett D.H."/>
            <person name="Yu J."/>
            <person name="Hu S."/>
            <person name="Xiao X."/>
        </authorList>
    </citation>
    <scope>NUCLEOTIDE SEQUENCE [LARGE SCALE GENOMIC DNA]</scope>
    <source>
        <strain>WP3 / JCM 13877</strain>
    </source>
</reference>
<protein>
    <recommendedName>
        <fullName evidence="1">Chaperone protein HscA homolog</fullName>
    </recommendedName>
</protein>
<feature type="chain" id="PRO_1000131694" description="Chaperone protein HscA homolog">
    <location>
        <begin position="1"/>
        <end position="620"/>
    </location>
</feature>
<dbReference type="EMBL" id="CP000472">
    <property type="protein sequence ID" value="ACJ28471.1"/>
    <property type="molecule type" value="Genomic_DNA"/>
</dbReference>
<dbReference type="RefSeq" id="WP_020911849.1">
    <property type="nucleotide sequence ID" value="NC_011566.1"/>
</dbReference>
<dbReference type="SMR" id="B8CMW9"/>
<dbReference type="STRING" id="225849.swp_1699"/>
<dbReference type="KEGG" id="swp:swp_1699"/>
<dbReference type="eggNOG" id="COG0443">
    <property type="taxonomic scope" value="Bacteria"/>
</dbReference>
<dbReference type="HOGENOM" id="CLU_005965_2_1_6"/>
<dbReference type="OrthoDB" id="9766019at2"/>
<dbReference type="Proteomes" id="UP000000753">
    <property type="component" value="Chromosome"/>
</dbReference>
<dbReference type="GO" id="GO:0005524">
    <property type="term" value="F:ATP binding"/>
    <property type="evidence" value="ECO:0007669"/>
    <property type="project" value="UniProtKB-KW"/>
</dbReference>
<dbReference type="GO" id="GO:0016887">
    <property type="term" value="F:ATP hydrolysis activity"/>
    <property type="evidence" value="ECO:0007669"/>
    <property type="project" value="UniProtKB-UniRule"/>
</dbReference>
<dbReference type="GO" id="GO:0140662">
    <property type="term" value="F:ATP-dependent protein folding chaperone"/>
    <property type="evidence" value="ECO:0007669"/>
    <property type="project" value="InterPro"/>
</dbReference>
<dbReference type="GO" id="GO:0051082">
    <property type="term" value="F:unfolded protein binding"/>
    <property type="evidence" value="ECO:0007669"/>
    <property type="project" value="InterPro"/>
</dbReference>
<dbReference type="GO" id="GO:0016226">
    <property type="term" value="P:iron-sulfur cluster assembly"/>
    <property type="evidence" value="ECO:0007669"/>
    <property type="project" value="InterPro"/>
</dbReference>
<dbReference type="FunFam" id="3.30.420.40:FF:000046">
    <property type="entry name" value="Chaperone protein HscA"/>
    <property type="match status" value="1"/>
</dbReference>
<dbReference type="FunFam" id="2.60.34.10:FF:000005">
    <property type="entry name" value="Chaperone protein HscA homolog"/>
    <property type="match status" value="1"/>
</dbReference>
<dbReference type="FunFam" id="3.30.420.40:FF:000020">
    <property type="entry name" value="Chaperone protein HscA homolog"/>
    <property type="match status" value="1"/>
</dbReference>
<dbReference type="Gene3D" id="1.20.1270.10">
    <property type="match status" value="1"/>
</dbReference>
<dbReference type="Gene3D" id="3.30.420.40">
    <property type="match status" value="2"/>
</dbReference>
<dbReference type="Gene3D" id="3.90.640.10">
    <property type="entry name" value="Actin, Chain A, domain 4"/>
    <property type="match status" value="1"/>
</dbReference>
<dbReference type="Gene3D" id="2.60.34.10">
    <property type="entry name" value="Substrate Binding Domain Of DNAk, Chain A, domain 1"/>
    <property type="match status" value="1"/>
</dbReference>
<dbReference type="HAMAP" id="MF_00679">
    <property type="entry name" value="HscA"/>
    <property type="match status" value="1"/>
</dbReference>
<dbReference type="InterPro" id="IPR043129">
    <property type="entry name" value="ATPase_NBD"/>
</dbReference>
<dbReference type="InterPro" id="IPR018181">
    <property type="entry name" value="Heat_shock_70_CS"/>
</dbReference>
<dbReference type="InterPro" id="IPR029048">
    <property type="entry name" value="HSP70_C_sf"/>
</dbReference>
<dbReference type="InterPro" id="IPR029047">
    <property type="entry name" value="HSP70_peptide-bd_sf"/>
</dbReference>
<dbReference type="InterPro" id="IPR013126">
    <property type="entry name" value="Hsp_70_fam"/>
</dbReference>
<dbReference type="InterPro" id="IPR010236">
    <property type="entry name" value="ISC_FeS_clus_asmbl_HscA"/>
</dbReference>
<dbReference type="NCBIfam" id="TIGR01991">
    <property type="entry name" value="HscA"/>
    <property type="match status" value="1"/>
</dbReference>
<dbReference type="NCBIfam" id="NF003520">
    <property type="entry name" value="PRK05183.1"/>
    <property type="match status" value="1"/>
</dbReference>
<dbReference type="PANTHER" id="PTHR19375">
    <property type="entry name" value="HEAT SHOCK PROTEIN 70KDA"/>
    <property type="match status" value="1"/>
</dbReference>
<dbReference type="Pfam" id="PF00012">
    <property type="entry name" value="HSP70"/>
    <property type="match status" value="1"/>
</dbReference>
<dbReference type="PRINTS" id="PR00301">
    <property type="entry name" value="HEATSHOCK70"/>
</dbReference>
<dbReference type="SUPFAM" id="SSF53067">
    <property type="entry name" value="Actin-like ATPase domain"/>
    <property type="match status" value="2"/>
</dbReference>
<dbReference type="SUPFAM" id="SSF100934">
    <property type="entry name" value="Heat shock protein 70kD (HSP70), C-terminal subdomain"/>
    <property type="match status" value="1"/>
</dbReference>
<dbReference type="SUPFAM" id="SSF100920">
    <property type="entry name" value="Heat shock protein 70kD (HSP70), peptide-binding domain"/>
    <property type="match status" value="1"/>
</dbReference>
<dbReference type="PROSITE" id="PS00297">
    <property type="entry name" value="HSP70_1"/>
    <property type="match status" value="1"/>
</dbReference>
<dbReference type="PROSITE" id="PS00329">
    <property type="entry name" value="HSP70_2"/>
    <property type="match status" value="1"/>
</dbReference>
<keyword id="KW-0067">ATP-binding</keyword>
<keyword id="KW-0143">Chaperone</keyword>
<keyword id="KW-0547">Nucleotide-binding</keyword>
<accession>B8CMW9</accession>
<gene>
    <name evidence="1" type="primary">hscA</name>
    <name type="ordered locus">swp_1699</name>
</gene>
<organism>
    <name type="scientific">Shewanella piezotolerans (strain WP3 / JCM 13877)</name>
    <dbReference type="NCBI Taxonomy" id="225849"/>
    <lineage>
        <taxon>Bacteria</taxon>
        <taxon>Pseudomonadati</taxon>
        <taxon>Pseudomonadota</taxon>
        <taxon>Gammaproteobacteria</taxon>
        <taxon>Alteromonadales</taxon>
        <taxon>Shewanellaceae</taxon>
        <taxon>Shewanella</taxon>
    </lineage>
</organism>
<evidence type="ECO:0000255" key="1">
    <source>
        <dbReference type="HAMAP-Rule" id="MF_00679"/>
    </source>
</evidence>
<name>HSCA_SHEPW</name>
<proteinExistence type="inferred from homology"/>